<feature type="chain" id="PRO_0000222861" description="Capsid protein">
    <location>
        <begin position="1"/>
        <end position="380"/>
    </location>
</feature>
<feature type="region of interest" description="R domain, interaction with RNA">
    <location>
        <begin position="1"/>
        <end position="92"/>
    </location>
</feature>
<feature type="region of interest" description="Involved in encapsidation" evidence="2">
    <location>
        <begin position="48"/>
        <end position="53"/>
    </location>
</feature>
<feature type="region of interest" description="S domain, virion shell">
    <location>
        <begin position="93"/>
        <end position="254"/>
    </location>
</feature>
<feature type="region of interest" description="P domain, projecting">
    <location>
        <begin position="255"/>
        <end position="380"/>
    </location>
</feature>
<feature type="strand" evidence="3">
    <location>
        <begin position="86"/>
        <end position="89"/>
    </location>
</feature>
<feature type="strand" evidence="3">
    <location>
        <begin position="94"/>
        <end position="107"/>
    </location>
</feature>
<feature type="helix" evidence="3">
    <location>
        <begin position="115"/>
        <end position="117"/>
    </location>
</feature>
<feature type="turn" evidence="3">
    <location>
        <begin position="131"/>
        <end position="133"/>
    </location>
</feature>
<feature type="turn" evidence="3">
    <location>
        <begin position="135"/>
        <end position="137"/>
    </location>
</feature>
<feature type="helix" evidence="3">
    <location>
        <begin position="138"/>
        <end position="141"/>
    </location>
</feature>
<feature type="strand" evidence="3">
    <location>
        <begin position="144"/>
        <end position="158"/>
    </location>
</feature>
<feature type="strand" evidence="3">
    <location>
        <begin position="167"/>
        <end position="175"/>
    </location>
</feature>
<feature type="turn" evidence="3">
    <location>
        <begin position="184"/>
        <end position="186"/>
    </location>
</feature>
<feature type="helix" evidence="3">
    <location>
        <begin position="187"/>
        <end position="189"/>
    </location>
</feature>
<feature type="strand" evidence="3">
    <location>
        <begin position="191"/>
        <end position="196"/>
    </location>
</feature>
<feature type="strand" evidence="3">
    <location>
        <begin position="202"/>
        <end position="205"/>
    </location>
</feature>
<feature type="turn" evidence="3">
    <location>
        <begin position="218"/>
        <end position="220"/>
    </location>
</feature>
<feature type="helix" evidence="3">
    <location>
        <begin position="223"/>
        <end position="226"/>
    </location>
</feature>
<feature type="strand" evidence="3">
    <location>
        <begin position="230"/>
        <end position="237"/>
    </location>
</feature>
<feature type="strand" evidence="3">
    <location>
        <begin position="241"/>
        <end position="257"/>
    </location>
</feature>
<feature type="strand" evidence="3">
    <location>
        <begin position="264"/>
        <end position="269"/>
    </location>
</feature>
<feature type="strand" evidence="3">
    <location>
        <begin position="271"/>
        <end position="274"/>
    </location>
</feature>
<feature type="strand" evidence="3">
    <location>
        <begin position="276"/>
        <end position="280"/>
    </location>
</feature>
<feature type="strand" evidence="3">
    <location>
        <begin position="284"/>
        <end position="289"/>
    </location>
</feature>
<feature type="strand" evidence="3">
    <location>
        <begin position="294"/>
        <end position="298"/>
    </location>
</feature>
<feature type="strand" evidence="3">
    <location>
        <begin position="302"/>
        <end position="310"/>
    </location>
</feature>
<feature type="strand" evidence="3">
    <location>
        <begin position="319"/>
        <end position="324"/>
    </location>
</feature>
<feature type="strand" evidence="3">
    <location>
        <begin position="327"/>
        <end position="334"/>
    </location>
</feature>
<feature type="strand" evidence="3">
    <location>
        <begin position="339"/>
        <end position="347"/>
    </location>
</feature>
<feature type="strand" evidence="3">
    <location>
        <begin position="352"/>
        <end position="355"/>
    </location>
</feature>
<feature type="strand" evidence="3">
    <location>
        <begin position="364"/>
        <end position="370"/>
    </location>
</feature>
<sequence>MALVSRNNNMRTLAKLAAPLATAGTRTIVDNKEAIWNGVKWIWGKLPKGKKGKNGNGALIAHPQAFPGAIAAPISYAYAVKGRKPRFQTAKGSVRITHREYVSVLSGTNGEFLRNNGTGPNNDFSINPLNPFLFPWLVNIAANFDQYKFNSLRFEYVPLVNTTTNGRVALYFDKDSEDPGPDDRAALANYAHLSEISPWAITKLTVPTDNVKRFISDTSSGDPKLINLGQFGWVAYSGPTAELGDIFVEYTVDLFEAQPTSPLLESLFRESASSVQTRMGLPYFSLEVASATDLVWQARVPGTYVVTIIFNSTVGGLTPSISGGGTINSSFSVSTAGSSAYVANITIRVNANLSLSGLTGATNAQLFAVRAITENAVQVV</sequence>
<keyword id="KW-0002">3D-structure</keyword>
<keyword id="KW-0167">Capsid protein</keyword>
<keyword id="KW-0694">RNA-binding</keyword>
<keyword id="KW-1142">T=3 icosahedral capsid protein</keyword>
<keyword id="KW-0946">Virion</keyword>
<evidence type="ECO:0000269" key="1">
    <source>
    </source>
</evidence>
<evidence type="ECO:0000305" key="2"/>
<evidence type="ECO:0007829" key="3">
    <source>
        <dbReference type="PDB" id="4LLF"/>
    </source>
</evidence>
<proteinExistence type="evidence at protein level"/>
<organism>
    <name type="scientific">Cucumber necrosis virus</name>
    <name type="common">CNV</name>
    <dbReference type="NCBI Taxonomy" id="12143"/>
    <lineage>
        <taxon>Viruses</taxon>
        <taxon>Riboviria</taxon>
        <taxon>Orthornavirae</taxon>
        <taxon>Kitrinoviricota</taxon>
        <taxon>Tolucaviricetes</taxon>
        <taxon>Tolivirales</taxon>
        <taxon>Tombusviridae</taxon>
        <taxon>Procedovirinae</taxon>
        <taxon>Tombusvirus</taxon>
        <taxon>Tombusvirus cucumis</taxon>
    </lineage>
</organism>
<organismHost>
    <name type="scientific">Cucumis sativus</name>
    <name type="common">Cucumber</name>
    <dbReference type="NCBI Taxonomy" id="3659"/>
</organismHost>
<protein>
    <recommendedName>
        <fullName>Capsid protein</fullName>
    </recommendedName>
    <alternativeName>
        <fullName>Coat protein</fullName>
    </alternativeName>
    <alternativeName>
        <fullName>p41</fullName>
    </alternativeName>
</protein>
<comment type="function">
    <text evidence="1">Capsid protein self-assembles to form an icosahedral capsid with a T=3 symmetry, about 32-35 nm in diameter, and consisting of 180 capsid proteins.</text>
</comment>
<comment type="subunit">
    <text evidence="2">Homomultimer.</text>
</comment>
<comment type="subcellular location">
    <subcellularLocation>
        <location evidence="2">Virion</location>
    </subcellularLocation>
</comment>
<comment type="similarity">
    <text evidence="2">Belongs to the icosahedral plant coat protein family.</text>
</comment>
<gene>
    <name type="ORF">ORF2</name>
</gene>
<reference key="1">
    <citation type="journal article" date="1989" name="Virology">
        <title>Complete nucleotide sequence of the cucumber necrosis virus genome.</title>
        <authorList>
            <person name="Rochon D.M."/>
            <person name="Tremaine J.H."/>
        </authorList>
    </citation>
    <scope>NUCLEOTIDE SEQUENCE [GENOMIC RNA]</scope>
</reference>
<reference key="2">
    <citation type="journal article" date="2010" name="Virology">
        <title>A highly basic KGKKGK sequence in the RNA-binding domain of the Cucumber necrosis virus coat protein is associated with encapsidation of full-length CNV RNA during infection.</title>
        <authorList>
            <person name="Reade R."/>
            <person name="Kakani K."/>
            <person name="Rochon D."/>
        </authorList>
    </citation>
    <scope>RNA-BINDING</scope>
    <scope>FUNCTION</scope>
</reference>
<name>CAPSD_CNV</name>
<dbReference type="EMBL" id="M25270">
    <property type="protein sequence ID" value="AAA42904.1"/>
    <property type="molecule type" value="Genomic_RNA"/>
</dbReference>
<dbReference type="PIR" id="JA0131">
    <property type="entry name" value="VCVGCN"/>
</dbReference>
<dbReference type="RefSeq" id="NP_040955.1">
    <property type="nucleotide sequence ID" value="NC_001469.1"/>
</dbReference>
<dbReference type="PDB" id="4LLF">
    <property type="method" value="X-ray"/>
    <property type="resolution" value="2.89 A"/>
    <property type="chains" value="A/B/D/E/F/G/H/I/J/K/L/M/N/O/P=1-380"/>
</dbReference>
<dbReference type="PDBsum" id="4LLF"/>
<dbReference type="SMR" id="P15183"/>
<dbReference type="KEGG" id="vg:1493950"/>
<dbReference type="OrthoDB" id="10131at10239"/>
<dbReference type="EvolutionaryTrace" id="P15183"/>
<dbReference type="Proteomes" id="UP000008565">
    <property type="component" value="Segment"/>
</dbReference>
<dbReference type="GO" id="GO:0039617">
    <property type="term" value="C:T=3 icosahedral viral capsid"/>
    <property type="evidence" value="ECO:0007669"/>
    <property type="project" value="UniProtKB-KW"/>
</dbReference>
<dbReference type="GO" id="GO:0003723">
    <property type="term" value="F:RNA binding"/>
    <property type="evidence" value="ECO:0007669"/>
    <property type="project" value="UniProtKB-KW"/>
</dbReference>
<dbReference type="GO" id="GO:0005198">
    <property type="term" value="F:structural molecule activity"/>
    <property type="evidence" value="ECO:0007669"/>
    <property type="project" value="InterPro"/>
</dbReference>
<dbReference type="Gene3D" id="2.60.120.20">
    <property type="match status" value="1"/>
</dbReference>
<dbReference type="Gene3D" id="2.60.40.4030">
    <property type="match status" value="1"/>
</dbReference>
<dbReference type="InterPro" id="IPR000937">
    <property type="entry name" value="Capsid_prot_S-dom_vir"/>
</dbReference>
<dbReference type="InterPro" id="IPR029053">
    <property type="entry name" value="Viral_coat"/>
</dbReference>
<dbReference type="Pfam" id="PF00729">
    <property type="entry name" value="Viral_coat"/>
    <property type="match status" value="1"/>
</dbReference>
<dbReference type="PRINTS" id="PR00233">
    <property type="entry name" value="ICOSAHEDRAL"/>
</dbReference>
<dbReference type="SUPFAM" id="SSF88633">
    <property type="entry name" value="Positive stranded ssRNA viruses"/>
    <property type="match status" value="1"/>
</dbReference>
<dbReference type="PROSITE" id="PS00555">
    <property type="entry name" value="ICOSAH_VIR_COAT_S"/>
    <property type="match status" value="1"/>
</dbReference>
<accession>P15183</accession>